<comment type="function">
    <text evidence="3 4">Involved in glucose-induced micropexophagy and ethanol-induced macropexophagy. Required for ATG2 recruitment to a perivacuolar compartment.</text>
</comment>
<comment type="catalytic activity">
    <reaction>
        <text>L-seryl-[protein] + ATP = O-phospho-L-seryl-[protein] + ADP + H(+)</text>
        <dbReference type="Rhea" id="RHEA:17989"/>
        <dbReference type="Rhea" id="RHEA-COMP:9863"/>
        <dbReference type="Rhea" id="RHEA-COMP:11604"/>
        <dbReference type="ChEBI" id="CHEBI:15378"/>
        <dbReference type="ChEBI" id="CHEBI:29999"/>
        <dbReference type="ChEBI" id="CHEBI:30616"/>
        <dbReference type="ChEBI" id="CHEBI:83421"/>
        <dbReference type="ChEBI" id="CHEBI:456216"/>
        <dbReference type="EC" id="2.7.11.1"/>
    </reaction>
</comment>
<comment type="catalytic activity">
    <reaction>
        <text>L-threonyl-[protein] + ATP = O-phospho-L-threonyl-[protein] + ADP + H(+)</text>
        <dbReference type="Rhea" id="RHEA:46608"/>
        <dbReference type="Rhea" id="RHEA-COMP:11060"/>
        <dbReference type="Rhea" id="RHEA-COMP:11605"/>
        <dbReference type="ChEBI" id="CHEBI:15378"/>
        <dbReference type="ChEBI" id="CHEBI:30013"/>
        <dbReference type="ChEBI" id="CHEBI:30616"/>
        <dbReference type="ChEBI" id="CHEBI:61977"/>
        <dbReference type="ChEBI" id="CHEBI:456216"/>
        <dbReference type="EC" id="2.7.11.1"/>
    </reaction>
</comment>
<comment type="subcellular location">
    <subcellularLocation>
        <location evidence="1">Golgi apparatus</location>
        <location evidence="1">trans-Golgi network membrane</location>
        <topology evidence="1">Lipid-anchor</topology>
    </subcellularLocation>
    <subcellularLocation>
        <location evidence="1">Endosome membrane</location>
        <topology evidence="1">Lipid-anchor</topology>
    </subcellularLocation>
</comment>
<comment type="similarity">
    <text evidence="2">Belongs to the protein kinase superfamily. Ser/Thr protein kinase family.</text>
</comment>
<name>VPS15_PICPA</name>
<dbReference type="EC" id="2.7.11.1"/>
<dbReference type="EMBL" id="X96945">
    <property type="protein sequence ID" value="CAB59206.1"/>
    <property type="molecule type" value="Genomic_DNA"/>
</dbReference>
<dbReference type="SMR" id="Q9UVG6"/>
<dbReference type="GO" id="GO:0010008">
    <property type="term" value="C:endosome membrane"/>
    <property type="evidence" value="ECO:0007669"/>
    <property type="project" value="UniProtKB-SubCell"/>
</dbReference>
<dbReference type="GO" id="GO:0005794">
    <property type="term" value="C:Golgi apparatus"/>
    <property type="evidence" value="ECO:0007669"/>
    <property type="project" value="UniProtKB-SubCell"/>
</dbReference>
<dbReference type="GO" id="GO:0005770">
    <property type="term" value="C:late endosome"/>
    <property type="evidence" value="ECO:0007669"/>
    <property type="project" value="TreeGrafter"/>
</dbReference>
<dbReference type="GO" id="GO:0071561">
    <property type="term" value="C:nucleus-vacuole junction"/>
    <property type="evidence" value="ECO:0007669"/>
    <property type="project" value="TreeGrafter"/>
</dbReference>
<dbReference type="GO" id="GO:0034271">
    <property type="term" value="C:phosphatidylinositol 3-kinase complex, class III, type I"/>
    <property type="evidence" value="ECO:0007669"/>
    <property type="project" value="TreeGrafter"/>
</dbReference>
<dbReference type="GO" id="GO:0034272">
    <property type="term" value="C:phosphatidylinositol 3-kinase complex, class III, type II"/>
    <property type="evidence" value="ECO:0007669"/>
    <property type="project" value="TreeGrafter"/>
</dbReference>
<dbReference type="GO" id="GO:0005524">
    <property type="term" value="F:ATP binding"/>
    <property type="evidence" value="ECO:0007669"/>
    <property type="project" value="UniProtKB-KW"/>
</dbReference>
<dbReference type="GO" id="GO:0106310">
    <property type="term" value="F:protein serine kinase activity"/>
    <property type="evidence" value="ECO:0007669"/>
    <property type="project" value="RHEA"/>
</dbReference>
<dbReference type="GO" id="GO:0004674">
    <property type="term" value="F:protein serine/threonine kinase activity"/>
    <property type="evidence" value="ECO:0007669"/>
    <property type="project" value="UniProtKB-KW"/>
</dbReference>
<dbReference type="GO" id="GO:0045324">
    <property type="term" value="P:late endosome to vacuole transport"/>
    <property type="evidence" value="ECO:0007669"/>
    <property type="project" value="InterPro"/>
</dbReference>
<dbReference type="GO" id="GO:0016236">
    <property type="term" value="P:macroautophagy"/>
    <property type="evidence" value="ECO:0007669"/>
    <property type="project" value="InterPro"/>
</dbReference>
<dbReference type="GO" id="GO:0006623">
    <property type="term" value="P:protein targeting to vacuole"/>
    <property type="evidence" value="ECO:0007669"/>
    <property type="project" value="TreeGrafter"/>
</dbReference>
<dbReference type="CDD" id="cd13980">
    <property type="entry name" value="STKc_Vps15"/>
    <property type="match status" value="1"/>
</dbReference>
<dbReference type="FunFam" id="1.10.510.10:FF:000497">
    <property type="entry name" value="Phosphoinositide 3-kinase regulatory subunit"/>
    <property type="match status" value="1"/>
</dbReference>
<dbReference type="Gene3D" id="1.25.10.10">
    <property type="entry name" value="Leucine-rich Repeat Variant"/>
    <property type="match status" value="1"/>
</dbReference>
<dbReference type="Gene3D" id="1.10.510.10">
    <property type="entry name" value="Transferase(Phosphotransferase) domain 1"/>
    <property type="match status" value="1"/>
</dbReference>
<dbReference type="Gene3D" id="2.130.10.10">
    <property type="entry name" value="YVTN repeat-like/Quinoprotein amine dehydrogenase"/>
    <property type="match status" value="2"/>
</dbReference>
<dbReference type="InterPro" id="IPR011989">
    <property type="entry name" value="ARM-like"/>
</dbReference>
<dbReference type="InterPro" id="IPR016024">
    <property type="entry name" value="ARM-type_fold"/>
</dbReference>
<dbReference type="InterPro" id="IPR011009">
    <property type="entry name" value="Kinase-like_dom_sf"/>
</dbReference>
<dbReference type="InterPro" id="IPR000719">
    <property type="entry name" value="Prot_kinase_dom"/>
</dbReference>
<dbReference type="InterPro" id="IPR045162">
    <property type="entry name" value="Vps15-like"/>
</dbReference>
<dbReference type="InterPro" id="IPR055231">
    <property type="entry name" value="VPS15-like_hel"/>
</dbReference>
<dbReference type="InterPro" id="IPR015943">
    <property type="entry name" value="WD40/YVTN_repeat-like_dom_sf"/>
</dbReference>
<dbReference type="InterPro" id="IPR036322">
    <property type="entry name" value="WD40_repeat_dom_sf"/>
</dbReference>
<dbReference type="InterPro" id="IPR001680">
    <property type="entry name" value="WD40_rpt"/>
</dbReference>
<dbReference type="PANTHER" id="PTHR17583">
    <property type="entry name" value="PHOSPHOINOSITIDE 3-KINASE REGULATORY SUBUNIT 4"/>
    <property type="match status" value="1"/>
</dbReference>
<dbReference type="PANTHER" id="PTHR17583:SF0">
    <property type="entry name" value="PHOSPHOINOSITIDE 3-KINASE REGULATORY SUBUNIT 4"/>
    <property type="match status" value="1"/>
</dbReference>
<dbReference type="Pfam" id="PF00069">
    <property type="entry name" value="Pkinase"/>
    <property type="match status" value="1"/>
</dbReference>
<dbReference type="Pfam" id="PF22956">
    <property type="entry name" value="VPS15-like_hel"/>
    <property type="match status" value="2"/>
</dbReference>
<dbReference type="Pfam" id="PF00400">
    <property type="entry name" value="WD40"/>
    <property type="match status" value="1"/>
</dbReference>
<dbReference type="SMART" id="SM00220">
    <property type="entry name" value="S_TKc"/>
    <property type="match status" value="1"/>
</dbReference>
<dbReference type="SMART" id="SM00320">
    <property type="entry name" value="WD40"/>
    <property type="match status" value="4"/>
</dbReference>
<dbReference type="SUPFAM" id="SSF48371">
    <property type="entry name" value="ARM repeat"/>
    <property type="match status" value="1"/>
</dbReference>
<dbReference type="SUPFAM" id="SSF56112">
    <property type="entry name" value="Protein kinase-like (PK-like)"/>
    <property type="match status" value="1"/>
</dbReference>
<dbReference type="SUPFAM" id="SSF50978">
    <property type="entry name" value="WD40 repeat-like"/>
    <property type="match status" value="1"/>
</dbReference>
<dbReference type="PROSITE" id="PS50011">
    <property type="entry name" value="PROTEIN_KINASE_DOM"/>
    <property type="match status" value="1"/>
</dbReference>
<dbReference type="PROSITE" id="PS50082">
    <property type="entry name" value="WD_REPEATS_2"/>
    <property type="match status" value="1"/>
</dbReference>
<dbReference type="PROSITE" id="PS50294">
    <property type="entry name" value="WD_REPEATS_REGION"/>
    <property type="match status" value="1"/>
</dbReference>
<protein>
    <recommendedName>
        <fullName>Putative serine/threonine-protein kinase VPS15</fullName>
        <ecNumber>2.7.11.1</ecNumber>
    </recommendedName>
    <alternativeName>
        <fullName>Vacuolar protein sorting-associated protein 15</fullName>
    </alternativeName>
</protein>
<evidence type="ECO:0000250" key="1"/>
<evidence type="ECO:0000255" key="2">
    <source>
        <dbReference type="PROSITE-ProRule" id="PRU00159"/>
    </source>
</evidence>
<evidence type="ECO:0000269" key="3">
    <source>
    </source>
</evidence>
<evidence type="ECO:0000269" key="4">
    <source>
    </source>
</evidence>
<keyword id="KW-0067">ATP-binding</keyword>
<keyword id="KW-0967">Endosome</keyword>
<keyword id="KW-0333">Golgi apparatus</keyword>
<keyword id="KW-0418">Kinase</keyword>
<keyword id="KW-0449">Lipoprotein</keyword>
<keyword id="KW-0472">Membrane</keyword>
<keyword id="KW-0519">Myristate</keyword>
<keyword id="KW-0547">Nucleotide-binding</keyword>
<keyword id="KW-0677">Repeat</keyword>
<keyword id="KW-0723">Serine/threonine-protein kinase</keyword>
<keyword id="KW-0808">Transferase</keyword>
<keyword id="KW-0853">WD repeat</keyword>
<proteinExistence type="inferred from homology"/>
<sequence length="1340" mass="151917">MGAELSLLAPTAQPIALSVYVDFLSNIQYNKPLGTSRFLKTVKGLNDQGSIVVKVLVKPNSGLDLSEWVEKLEFLRLKLLDVPNVIPYNLVIDSVRAGYLIRPFQQRTLYERVSIQPYLEPIEKKWIAFQLIHAVMECHERGQYHGDIKSENVLLTSWDMVFLTDFAPFKPIYLPGNNPSQFSFYFDTSRRNVCYVAPERFLGEGTPTQYQEVDKLTSSMDIFSLGCTVAELFLEGSVLFTLPQLFKYKKGEYTPSLSGIVDNDLRNMIQEMIDLDPRKRISAHDCLRKHRGKVFPEYFYSFLYDYMLELSTPSDHSVGNWRFDECDRRIERIYNDMGMICDKLDVNLDLNIVHSFTEEPSQNVIPMTLRLPGVEPHIPQSSKTPYDSALIILNILLHSMRNTTHSSYRIKSCDLILMISEMLSDEQKLDRCLPYLVHLLNDPSIDVQAAALKYMTQLLLLVDYLTPVNVLIFPEYILPKLASFLSTTKGSYMRMIFATILPHLAKTALKFYEMAILLGSHVEKFELLKNFENLTIQLLIDPDSSAKISLLKNILPLASVFGKDKTNDIILSHMITYLNDPDENLRVAFIESILGLSIFVGITSLENYILPLLVQTLTDNSEIVVVNVLRSFAELNNLGLIKKRYKFDLIKVSSKLLLHPNSWIRLGTLRLLISVVKDLSLTDFYCLLYPLVRPFFEYEVTNFDWATLYPCIIKPIPRSIYTLSITWALKAEKTLFWQQVKLAKPDPFGSRNSTFLLNRNSKIGESGVVSNNQIPTSPEDIGWLGKLKASGFDEKDLWKIATLRDYIFRVARSRSNIPTQENNEVTMQQMGIYPRIVFFEKGSMYETEGFVTGSSMMANYRILVNSEYSPESLTKRKTVGGVNTNHTYSGANPYILKFLECIKFRHVLDDSEEFGPSIPSATVEEGHWKFEGVLVSHLTEHTGSITSLALSPDQQYFLTGDSKGIIRLWDVLQLERNGYATSHVTVSMSSSVKDIKFIENRNSFCAVTADGEIKIFRVEINSTSSSVRSNGSPHRHESISLLREHSLEGEHISDMKFIGPNLAVTTLSCKLILFDLRDMQIAEEIQNPVSHGFITSFDLDSSQSWLLIGTSKGILDFYDLRFELLVKSWKLKSTSYPIKHITVPPAGFTCNRKSERFALINGGTNDSVTIVFDVSKGQCSELYFTETVNLNTAIDNYEVLEVDNGEERTRTSVLATEVEDRSITSLTMLGSNQFLTATFDKRVILWDTGNKANSSALISKLDDFTSSFSSVQVRPHLMAINEKIVEKDPQDIGGPKRNMASANSSTFDLHSDIITGIAVIQKPLKMLILVDRAGVINIYK</sequence>
<gene>
    <name type="primary">VPS15</name>
</gene>
<accession>Q9UVG6</accession>
<organism>
    <name type="scientific">Komagataella pastoris</name>
    <name type="common">Yeast</name>
    <name type="synonym">Pichia pastoris</name>
    <dbReference type="NCBI Taxonomy" id="4922"/>
    <lineage>
        <taxon>Eukaryota</taxon>
        <taxon>Fungi</taxon>
        <taxon>Dikarya</taxon>
        <taxon>Ascomycota</taxon>
        <taxon>Saccharomycotina</taxon>
        <taxon>Pichiomycetes</taxon>
        <taxon>Pichiales</taxon>
        <taxon>Pichiaceae</taxon>
        <taxon>Komagataella</taxon>
    </lineage>
</organism>
<feature type="initiator methionine" description="Removed" evidence="1">
    <location>
        <position position="1"/>
    </location>
</feature>
<feature type="chain" id="PRO_0000086801" description="Putative serine/threonine-protein kinase VPS15">
    <location>
        <begin position="2"/>
        <end position="1340"/>
    </location>
</feature>
<feature type="domain" description="Protein kinase" evidence="2">
    <location>
        <begin position="27"/>
        <end position="303"/>
    </location>
</feature>
<feature type="repeat" description="HEAT 1">
    <location>
        <begin position="432"/>
        <end position="470"/>
    </location>
</feature>
<feature type="repeat" description="HEAT 2">
    <location>
        <begin position="570"/>
        <end position="608"/>
    </location>
</feature>
<feature type="repeat" description="WD 1">
    <location>
        <begin position="940"/>
        <end position="979"/>
    </location>
</feature>
<feature type="repeat" description="WD 2">
    <location>
        <begin position="987"/>
        <end position="1026"/>
    </location>
</feature>
<feature type="repeat" description="WD 3">
    <location>
        <begin position="1089"/>
        <end position="1128"/>
    </location>
</feature>
<feature type="repeat" description="WD 4">
    <location>
        <begin position="1133"/>
        <end position="1182"/>
    </location>
</feature>
<feature type="repeat" description="WD 5">
    <location>
        <begin position="1218"/>
        <end position="1256"/>
    </location>
</feature>
<feature type="repeat" description="WD 6">
    <location>
        <begin position="1309"/>
        <end position="1340"/>
    </location>
</feature>
<feature type="active site" description="Proton acceptor" evidence="2">
    <location>
        <position position="147"/>
    </location>
</feature>
<feature type="binding site" evidence="2">
    <location>
        <begin position="33"/>
        <end position="41"/>
    </location>
    <ligand>
        <name>ATP</name>
        <dbReference type="ChEBI" id="CHEBI:30616"/>
    </ligand>
</feature>
<feature type="binding site" evidence="2">
    <location>
        <position position="54"/>
    </location>
    <ligand>
        <name>ATP</name>
        <dbReference type="ChEBI" id="CHEBI:30616"/>
    </ligand>
</feature>
<feature type="lipid moiety-binding region" description="N-myristoyl glycine" evidence="1">
    <location>
        <position position="2"/>
    </location>
</feature>
<reference key="1">
    <citation type="journal article" date="1996" name="Mol. Cell. Biol.">
        <title>The Pichia pastoris PER6 gene product is a peroxisomal integral membrane protein essential for peroxisome biogenesis and has sequence similarity to the Zellweger syndrome protein PAF-1.</title>
        <authorList>
            <person name="Waterham H.R."/>
            <person name="de Vries Y."/>
            <person name="Russell K.A."/>
            <person name="Xie W."/>
            <person name="Veenhuis M."/>
            <person name="Cregg J.M."/>
        </authorList>
    </citation>
    <scope>NUCLEOTIDE SEQUENCE [GENOMIC DNA] OF 1-1119</scope>
    <source>
        <strain>ATCC 76273 / CBS 7435 / CECT 11407 / NRRL Y-11430</strain>
    </source>
</reference>
<reference key="2">
    <citation type="journal article" date="1999" name="Curr. Genet.">
        <title>A Pichia pastoris VPS15 homologue is required in selective peroxisome autophagy.</title>
        <authorList>
            <person name="Stasyk O.V."/>
            <person name="van der Klei I.J."/>
            <person name="Bellu A.R."/>
            <person name="Shen S."/>
            <person name="Kiel J.A.K.W."/>
            <person name="Cregg J.M."/>
            <person name="Veenhuis M."/>
        </authorList>
    </citation>
    <scope>NUCLEOTIDE SEQUENCE [GENOMIC DNA] OF 1075-1340</scope>
    <scope>FUNCTION</scope>
    <source>
        <strain>ATCC 76273 / CBS 7435 / CECT 11407 / NRRL Y-11430</strain>
    </source>
</reference>
<reference key="3">
    <citation type="journal article" date="2001" name="J. Biol. Chem.">
        <title>GSA11 encodes a unique 208-kDa protein required for pexophagy and autophagy in Pichia pastoris.</title>
        <authorList>
            <person name="Stromhaug P.E."/>
            <person name="Bevan A."/>
            <person name="Dunn W.A. Jr."/>
        </authorList>
    </citation>
    <scope>FUNCTION</scope>
</reference>